<evidence type="ECO:0000250" key="1"/>
<evidence type="ECO:0000250" key="2">
    <source>
        <dbReference type="UniProtKB" id="Q04089"/>
    </source>
</evidence>
<evidence type="ECO:0000255" key="3">
    <source>
        <dbReference type="PROSITE-ProRule" id="PRU00902"/>
    </source>
</evidence>
<evidence type="ECO:0000256" key="4">
    <source>
        <dbReference type="SAM" id="MobiDB-lite"/>
    </source>
</evidence>
<gene>
    <name type="primary">DOT1</name>
    <name type="ordered locus">CNBK1310</name>
</gene>
<comment type="function">
    <text evidence="2">Histone methyltransferase that specifically trimethylates histone H3 to form H3K79me3. This methylation is required for telomere silencing and for the pachytene checkpoint during the meiotic cell cycle by allowing the recruitment of RAD9 to double strand breaks. Nucleosomes are preferred as substrate compared to free histone.</text>
</comment>
<comment type="catalytic activity">
    <reaction evidence="2 3">
        <text>L-lysyl(79)-[histone H3] + 3 S-adenosyl-L-methionine = N(6),N(6),N(6)-trimethyl-L-lysyl(79)-[histone H3] + 3 S-adenosyl-L-homocysteine + 3 H(+)</text>
        <dbReference type="Rhea" id="RHEA:60328"/>
        <dbReference type="Rhea" id="RHEA-COMP:15549"/>
        <dbReference type="Rhea" id="RHEA-COMP:15552"/>
        <dbReference type="ChEBI" id="CHEBI:15378"/>
        <dbReference type="ChEBI" id="CHEBI:29969"/>
        <dbReference type="ChEBI" id="CHEBI:57856"/>
        <dbReference type="ChEBI" id="CHEBI:59789"/>
        <dbReference type="ChEBI" id="CHEBI:61961"/>
        <dbReference type="EC" id="2.1.1.360"/>
    </reaction>
</comment>
<comment type="activity regulation">
    <text evidence="1">Ubiquitination of histone H2B to form H2BK123ub1 is required for efficient DOT1 methyltransferase activity on histone H3.</text>
</comment>
<comment type="subcellular location">
    <subcellularLocation>
        <location evidence="1">Nucleus</location>
    </subcellularLocation>
</comment>
<comment type="miscellaneous">
    <text>In contrast to other lysine histone methyltransferases, it does not contain a SET domain, suggesting the existence of another mechanism for methylation of lysine residues of histones.</text>
</comment>
<comment type="similarity">
    <text evidence="3">Belongs to the class I-like SAM-binding methyltransferase superfamily. DOT1 family.</text>
</comment>
<organism>
    <name type="scientific">Cryptococcus neoformans var. neoformans serotype D (strain B-3501A)</name>
    <name type="common">Filobasidiella neoformans</name>
    <dbReference type="NCBI Taxonomy" id="283643"/>
    <lineage>
        <taxon>Eukaryota</taxon>
        <taxon>Fungi</taxon>
        <taxon>Dikarya</taxon>
        <taxon>Basidiomycota</taxon>
        <taxon>Agaricomycotina</taxon>
        <taxon>Tremellomycetes</taxon>
        <taxon>Tremellales</taxon>
        <taxon>Cryptococcaceae</taxon>
        <taxon>Cryptococcus</taxon>
        <taxon>Cryptococcus neoformans species complex</taxon>
    </lineage>
</organism>
<name>DOT1_CRYNB</name>
<dbReference type="EC" id="2.1.1.360"/>
<dbReference type="EMBL" id="AAEY01000052">
    <property type="protein sequence ID" value="EAL18110.1"/>
    <property type="molecule type" value="Genomic_DNA"/>
</dbReference>
<dbReference type="RefSeq" id="XP_772757.1">
    <property type="nucleotide sequence ID" value="XM_767664.1"/>
</dbReference>
<dbReference type="SMR" id="P0CN15"/>
<dbReference type="GeneID" id="4938827"/>
<dbReference type="KEGG" id="cnb:CNBK1310"/>
<dbReference type="VEuPathDB" id="FungiDB:CNBK1310"/>
<dbReference type="HOGENOM" id="CLU_027287_1_0_1"/>
<dbReference type="OrthoDB" id="6723at5206"/>
<dbReference type="GO" id="GO:0000781">
    <property type="term" value="C:chromosome, telomeric region"/>
    <property type="evidence" value="ECO:0007669"/>
    <property type="project" value="GOC"/>
</dbReference>
<dbReference type="GO" id="GO:0000786">
    <property type="term" value="C:nucleosome"/>
    <property type="evidence" value="ECO:0007669"/>
    <property type="project" value="InterPro"/>
</dbReference>
<dbReference type="GO" id="GO:0005634">
    <property type="term" value="C:nucleus"/>
    <property type="evidence" value="ECO:0007669"/>
    <property type="project" value="UniProtKB-SubCell"/>
</dbReference>
<dbReference type="GO" id="GO:0042393">
    <property type="term" value="F:histone binding"/>
    <property type="evidence" value="ECO:0007669"/>
    <property type="project" value="InterPro"/>
</dbReference>
<dbReference type="GO" id="GO:0140956">
    <property type="term" value="F:histone H3K79 trimethyltransferase activity"/>
    <property type="evidence" value="ECO:0007669"/>
    <property type="project" value="UniProtKB-EC"/>
</dbReference>
<dbReference type="GO" id="GO:0000077">
    <property type="term" value="P:DNA damage checkpoint signaling"/>
    <property type="evidence" value="ECO:0007669"/>
    <property type="project" value="InterPro"/>
</dbReference>
<dbReference type="GO" id="GO:0006281">
    <property type="term" value="P:DNA repair"/>
    <property type="evidence" value="ECO:0007669"/>
    <property type="project" value="InterPro"/>
</dbReference>
<dbReference type="GO" id="GO:0032259">
    <property type="term" value="P:methylation"/>
    <property type="evidence" value="ECO:0007669"/>
    <property type="project" value="UniProtKB-KW"/>
</dbReference>
<dbReference type="GO" id="GO:0031509">
    <property type="term" value="P:subtelomeric heterochromatin formation"/>
    <property type="evidence" value="ECO:0007669"/>
    <property type="project" value="InterPro"/>
</dbReference>
<dbReference type="CDD" id="cd02440">
    <property type="entry name" value="AdoMet_MTases"/>
    <property type="match status" value="1"/>
</dbReference>
<dbReference type="FunFam" id="3.40.50.150:FF:000033">
    <property type="entry name" value="Histone-lysine N-methyltransferase, H3 lysine-79 specific"/>
    <property type="match status" value="1"/>
</dbReference>
<dbReference type="Gene3D" id="1.10.260.170">
    <property type="match status" value="1"/>
</dbReference>
<dbReference type="Gene3D" id="3.40.50.150">
    <property type="entry name" value="Vaccinia Virus protein VP39"/>
    <property type="match status" value="1"/>
</dbReference>
<dbReference type="InterPro" id="IPR021162">
    <property type="entry name" value="Dot1"/>
</dbReference>
<dbReference type="InterPro" id="IPR025789">
    <property type="entry name" value="DOT1_dom"/>
</dbReference>
<dbReference type="InterPro" id="IPR030445">
    <property type="entry name" value="H3-K79_meTrfase"/>
</dbReference>
<dbReference type="InterPro" id="IPR029063">
    <property type="entry name" value="SAM-dependent_MTases_sf"/>
</dbReference>
<dbReference type="PANTHER" id="PTHR21451">
    <property type="entry name" value="HISTONE H3 METHYLTRANSFERASE"/>
    <property type="match status" value="1"/>
</dbReference>
<dbReference type="PANTHER" id="PTHR21451:SF0">
    <property type="entry name" value="HISTONE-LYSINE N-METHYLTRANSFERASE, H3 LYSINE-79 SPECIFIC"/>
    <property type="match status" value="1"/>
</dbReference>
<dbReference type="Pfam" id="PF08123">
    <property type="entry name" value="DOT1"/>
    <property type="match status" value="1"/>
</dbReference>
<dbReference type="PIRSF" id="PIRSF017570">
    <property type="entry name" value="Histone_H3-K79_MeTrfase"/>
    <property type="match status" value="1"/>
</dbReference>
<dbReference type="SUPFAM" id="SSF53335">
    <property type="entry name" value="S-adenosyl-L-methionine-dependent methyltransferases"/>
    <property type="match status" value="1"/>
</dbReference>
<dbReference type="PROSITE" id="PS51569">
    <property type="entry name" value="DOT1"/>
    <property type="match status" value="1"/>
</dbReference>
<accession>P0CN15</accession>
<accession>Q55K55</accession>
<accession>Q5K9E4</accession>
<keyword id="KW-0156">Chromatin regulator</keyword>
<keyword id="KW-0489">Methyltransferase</keyword>
<keyword id="KW-0539">Nucleus</keyword>
<keyword id="KW-0677">Repeat</keyword>
<keyword id="KW-0949">S-adenosyl-L-methionine</keyword>
<keyword id="KW-0804">Transcription</keyword>
<keyword id="KW-0805">Transcription regulation</keyword>
<keyword id="KW-0808">Transferase</keyword>
<protein>
    <recommendedName>
        <fullName>Histone-lysine N-methyltransferase, H3 lysine-79 specific</fullName>
        <ecNumber>2.1.1.360</ecNumber>
    </recommendedName>
    <alternativeName>
        <fullName>Histone H3-K79 methyltransferase</fullName>
        <shortName>H3-K79-HMTase</shortName>
    </alternativeName>
</protein>
<proteinExistence type="inferred from homology"/>
<sequence>MFSFFGDESKLPASTVMVSRMTVKKQAAARQQSSGPMAGPSKPSNVTPKHSHGSLKGTPRSASEKGTPKQGPSSSSKSTSKVKQEERIRPSTIPRTPASSSSPGRLKRKTPKVQVVESESSSGSESSDDALDSKPKRPKVTRKETGIDMTPLPGEQVVGRRVFCWDKVDMRGEWGRGWAGFVGCDEVVRGNVQGWANGGGGDGSKNLGKYRAFFPQEGFDRDGDFLPSVEVLYPAKGCREKFVLMVPSSDREFNPIGELRNTLRLILEHYIPPSHRHIFGNLAESLDISNPLSSLPSRMTTPLPNSLVTPPPDPASPSPAFAFEISATSTPAPSTERQETIADLIRKSLAPNRRDGPLFVTAIERYNSAMQAIQEDGTLQQWLDEGMNGGKGIKVREWAALVDFVHDQAYSRVVGGYSHELEHHPKHPEEVSKAISGKEDAYGELRHAFMSKIIEQTKLGPDSVFVDLGSGVGNCVLQASLQAGSRSYGFELLPVPAHCARLQVREVQRRWAMWALKGNLDVEVHEGDFRVHKEVGRRLREADVVLVNNEVFPSSLNMDLADMFLDLKEGAKIVSLKPFVPEGFRMNESNCDSFAAILRSTQHDYYRDWVSWKGEWGNYYVAVIDRSRRIKFEESMTGRASRRR</sequence>
<feature type="chain" id="PRO_0000410061" description="Histone-lysine N-methyltransferase, H3 lysine-79 specific">
    <location>
        <begin position="1"/>
        <end position="644"/>
    </location>
</feature>
<feature type="domain" description="DOT1" evidence="3">
    <location>
        <begin position="297"/>
        <end position="637"/>
    </location>
</feature>
<feature type="region of interest" description="Disordered" evidence="4">
    <location>
        <begin position="21"/>
        <end position="152"/>
    </location>
</feature>
<feature type="compositionally biased region" description="Low complexity" evidence="4">
    <location>
        <begin position="68"/>
        <end position="81"/>
    </location>
</feature>
<feature type="compositionally biased region" description="Polar residues" evidence="4">
    <location>
        <begin position="93"/>
        <end position="103"/>
    </location>
</feature>
<feature type="compositionally biased region" description="Basic and acidic residues" evidence="4">
    <location>
        <begin position="131"/>
        <end position="146"/>
    </location>
</feature>
<feature type="binding site" evidence="3">
    <location>
        <begin position="442"/>
        <end position="445"/>
    </location>
    <ligand>
        <name>S-adenosyl-L-methionine</name>
        <dbReference type="ChEBI" id="CHEBI:59789"/>
    </ligand>
</feature>
<feature type="binding site" evidence="3">
    <location>
        <begin position="465"/>
        <end position="474"/>
    </location>
    <ligand>
        <name>S-adenosyl-L-methionine</name>
        <dbReference type="ChEBI" id="CHEBI:59789"/>
    </ligand>
</feature>
<feature type="binding site" evidence="3">
    <location>
        <position position="491"/>
    </location>
    <ligand>
        <name>S-adenosyl-L-methionine</name>
        <dbReference type="ChEBI" id="CHEBI:59789"/>
    </ligand>
</feature>
<feature type="binding site" evidence="3">
    <location>
        <begin position="528"/>
        <end position="529"/>
    </location>
    <ligand>
        <name>S-adenosyl-L-methionine</name>
        <dbReference type="ChEBI" id="CHEBI:59789"/>
    </ligand>
</feature>
<reference key="1">
    <citation type="journal article" date="2005" name="Science">
        <title>The genome of the basidiomycetous yeast and human pathogen Cryptococcus neoformans.</title>
        <authorList>
            <person name="Loftus B.J."/>
            <person name="Fung E."/>
            <person name="Roncaglia P."/>
            <person name="Rowley D."/>
            <person name="Amedeo P."/>
            <person name="Bruno D."/>
            <person name="Vamathevan J."/>
            <person name="Miranda M."/>
            <person name="Anderson I.J."/>
            <person name="Fraser J.A."/>
            <person name="Allen J.E."/>
            <person name="Bosdet I.E."/>
            <person name="Brent M.R."/>
            <person name="Chiu R."/>
            <person name="Doering T.L."/>
            <person name="Donlin M.J."/>
            <person name="D'Souza C.A."/>
            <person name="Fox D.S."/>
            <person name="Grinberg V."/>
            <person name="Fu J."/>
            <person name="Fukushima M."/>
            <person name="Haas B.J."/>
            <person name="Huang J.C."/>
            <person name="Janbon G."/>
            <person name="Jones S.J.M."/>
            <person name="Koo H.L."/>
            <person name="Krzywinski M.I."/>
            <person name="Kwon-Chung K.J."/>
            <person name="Lengeler K.B."/>
            <person name="Maiti R."/>
            <person name="Marra M.A."/>
            <person name="Marra R.E."/>
            <person name="Mathewson C.A."/>
            <person name="Mitchell T.G."/>
            <person name="Pertea M."/>
            <person name="Riggs F.R."/>
            <person name="Salzberg S.L."/>
            <person name="Schein J.E."/>
            <person name="Shvartsbeyn A."/>
            <person name="Shin H."/>
            <person name="Shumway M."/>
            <person name="Specht C.A."/>
            <person name="Suh B.B."/>
            <person name="Tenney A."/>
            <person name="Utterback T.R."/>
            <person name="Wickes B.L."/>
            <person name="Wortman J.R."/>
            <person name="Wye N.H."/>
            <person name="Kronstad J.W."/>
            <person name="Lodge J.K."/>
            <person name="Heitman J."/>
            <person name="Davis R.W."/>
            <person name="Fraser C.M."/>
            <person name="Hyman R.W."/>
        </authorList>
    </citation>
    <scope>NUCLEOTIDE SEQUENCE [LARGE SCALE GENOMIC DNA]</scope>
    <source>
        <strain>B-3501A</strain>
    </source>
</reference>